<evidence type="ECO:0000250" key="1">
    <source>
        <dbReference type="UniProtKB" id="Q8IYU2"/>
    </source>
</evidence>
<evidence type="ECO:0000255" key="2">
    <source>
        <dbReference type="PROSITE-ProRule" id="PRU00104"/>
    </source>
</evidence>
<evidence type="ECO:0000256" key="3">
    <source>
        <dbReference type="SAM" id="MobiDB-lite"/>
    </source>
</evidence>
<evidence type="ECO:0000269" key="4">
    <source>
    </source>
</evidence>
<evidence type="ECO:0000269" key="5">
    <source>
    </source>
</evidence>
<evidence type="ECO:0000269" key="6">
    <source>
    </source>
</evidence>
<evidence type="ECO:0000303" key="7">
    <source>
    </source>
</evidence>
<evidence type="ECO:0000303" key="8">
    <source>
    </source>
</evidence>
<evidence type="ECO:0000303" key="9">
    <source ref="4"/>
</evidence>
<evidence type="ECO:0000305" key="10"/>
<name>HACE1_MOUSE</name>
<keyword id="KW-0025">Alternative splicing</keyword>
<keyword id="KW-0040">ANK repeat</keyword>
<keyword id="KW-0131">Cell cycle</keyword>
<keyword id="KW-0963">Cytoplasm</keyword>
<keyword id="KW-0256">Endoplasmic reticulum</keyword>
<keyword id="KW-0333">Golgi apparatus</keyword>
<keyword id="KW-0472">Membrane</keyword>
<keyword id="KW-1185">Reference proteome</keyword>
<keyword id="KW-0677">Repeat</keyword>
<keyword id="KW-0804">Transcription</keyword>
<keyword id="KW-0805">Transcription regulation</keyword>
<keyword id="KW-0808">Transferase</keyword>
<keyword id="KW-0832">Ubl conjugation</keyword>
<keyword id="KW-0833">Ubl conjugation pathway</keyword>
<gene>
    <name type="primary">Hace1</name>
    <name type="synonym">Kiaa1320</name>
</gene>
<reference key="1">
    <citation type="journal article" date="2005" name="Science">
        <title>The transcriptional landscape of the mammalian genome.</title>
        <authorList>
            <person name="Carninci P."/>
            <person name="Kasukawa T."/>
            <person name="Katayama S."/>
            <person name="Gough J."/>
            <person name="Frith M.C."/>
            <person name="Maeda N."/>
            <person name="Oyama R."/>
            <person name="Ravasi T."/>
            <person name="Lenhard B."/>
            <person name="Wells C."/>
            <person name="Kodzius R."/>
            <person name="Shimokawa K."/>
            <person name="Bajic V.B."/>
            <person name="Brenner S.E."/>
            <person name="Batalov S."/>
            <person name="Forrest A.R."/>
            <person name="Zavolan M."/>
            <person name="Davis M.J."/>
            <person name="Wilming L.G."/>
            <person name="Aidinis V."/>
            <person name="Allen J.E."/>
            <person name="Ambesi-Impiombato A."/>
            <person name="Apweiler R."/>
            <person name="Aturaliya R.N."/>
            <person name="Bailey T.L."/>
            <person name="Bansal M."/>
            <person name="Baxter L."/>
            <person name="Beisel K.W."/>
            <person name="Bersano T."/>
            <person name="Bono H."/>
            <person name="Chalk A.M."/>
            <person name="Chiu K.P."/>
            <person name="Choudhary V."/>
            <person name="Christoffels A."/>
            <person name="Clutterbuck D.R."/>
            <person name="Crowe M.L."/>
            <person name="Dalla E."/>
            <person name="Dalrymple B.P."/>
            <person name="de Bono B."/>
            <person name="Della Gatta G."/>
            <person name="di Bernardo D."/>
            <person name="Down T."/>
            <person name="Engstrom P."/>
            <person name="Fagiolini M."/>
            <person name="Faulkner G."/>
            <person name="Fletcher C.F."/>
            <person name="Fukushima T."/>
            <person name="Furuno M."/>
            <person name="Futaki S."/>
            <person name="Gariboldi M."/>
            <person name="Georgii-Hemming P."/>
            <person name="Gingeras T.R."/>
            <person name="Gojobori T."/>
            <person name="Green R.E."/>
            <person name="Gustincich S."/>
            <person name="Harbers M."/>
            <person name="Hayashi Y."/>
            <person name="Hensch T.K."/>
            <person name="Hirokawa N."/>
            <person name="Hill D."/>
            <person name="Huminiecki L."/>
            <person name="Iacono M."/>
            <person name="Ikeo K."/>
            <person name="Iwama A."/>
            <person name="Ishikawa T."/>
            <person name="Jakt M."/>
            <person name="Kanapin A."/>
            <person name="Katoh M."/>
            <person name="Kawasawa Y."/>
            <person name="Kelso J."/>
            <person name="Kitamura H."/>
            <person name="Kitano H."/>
            <person name="Kollias G."/>
            <person name="Krishnan S.P."/>
            <person name="Kruger A."/>
            <person name="Kummerfeld S.K."/>
            <person name="Kurochkin I.V."/>
            <person name="Lareau L.F."/>
            <person name="Lazarevic D."/>
            <person name="Lipovich L."/>
            <person name="Liu J."/>
            <person name="Liuni S."/>
            <person name="McWilliam S."/>
            <person name="Madan Babu M."/>
            <person name="Madera M."/>
            <person name="Marchionni L."/>
            <person name="Matsuda H."/>
            <person name="Matsuzawa S."/>
            <person name="Miki H."/>
            <person name="Mignone F."/>
            <person name="Miyake S."/>
            <person name="Morris K."/>
            <person name="Mottagui-Tabar S."/>
            <person name="Mulder N."/>
            <person name="Nakano N."/>
            <person name="Nakauchi H."/>
            <person name="Ng P."/>
            <person name="Nilsson R."/>
            <person name="Nishiguchi S."/>
            <person name="Nishikawa S."/>
            <person name="Nori F."/>
            <person name="Ohara O."/>
            <person name="Okazaki Y."/>
            <person name="Orlando V."/>
            <person name="Pang K.C."/>
            <person name="Pavan W.J."/>
            <person name="Pavesi G."/>
            <person name="Pesole G."/>
            <person name="Petrovsky N."/>
            <person name="Piazza S."/>
            <person name="Reed J."/>
            <person name="Reid J.F."/>
            <person name="Ring B.Z."/>
            <person name="Ringwald M."/>
            <person name="Rost B."/>
            <person name="Ruan Y."/>
            <person name="Salzberg S.L."/>
            <person name="Sandelin A."/>
            <person name="Schneider C."/>
            <person name="Schoenbach C."/>
            <person name="Sekiguchi K."/>
            <person name="Semple C.A."/>
            <person name="Seno S."/>
            <person name="Sessa L."/>
            <person name="Sheng Y."/>
            <person name="Shibata Y."/>
            <person name="Shimada H."/>
            <person name="Shimada K."/>
            <person name="Silva D."/>
            <person name="Sinclair B."/>
            <person name="Sperling S."/>
            <person name="Stupka E."/>
            <person name="Sugiura K."/>
            <person name="Sultana R."/>
            <person name="Takenaka Y."/>
            <person name="Taki K."/>
            <person name="Tammoja K."/>
            <person name="Tan S.L."/>
            <person name="Tang S."/>
            <person name="Taylor M.S."/>
            <person name="Tegner J."/>
            <person name="Teichmann S.A."/>
            <person name="Ueda H.R."/>
            <person name="van Nimwegen E."/>
            <person name="Verardo R."/>
            <person name="Wei C.L."/>
            <person name="Yagi K."/>
            <person name="Yamanishi H."/>
            <person name="Zabarovsky E."/>
            <person name="Zhu S."/>
            <person name="Zimmer A."/>
            <person name="Hide W."/>
            <person name="Bult C."/>
            <person name="Grimmond S.M."/>
            <person name="Teasdale R.D."/>
            <person name="Liu E.T."/>
            <person name="Brusic V."/>
            <person name="Quackenbush J."/>
            <person name="Wahlestedt C."/>
            <person name="Mattick J.S."/>
            <person name="Hume D.A."/>
            <person name="Kai C."/>
            <person name="Sasaki D."/>
            <person name="Tomaru Y."/>
            <person name="Fukuda S."/>
            <person name="Kanamori-Katayama M."/>
            <person name="Suzuki M."/>
            <person name="Aoki J."/>
            <person name="Arakawa T."/>
            <person name="Iida J."/>
            <person name="Imamura K."/>
            <person name="Itoh M."/>
            <person name="Kato T."/>
            <person name="Kawaji H."/>
            <person name="Kawagashira N."/>
            <person name="Kawashima T."/>
            <person name="Kojima M."/>
            <person name="Kondo S."/>
            <person name="Konno H."/>
            <person name="Nakano K."/>
            <person name="Ninomiya N."/>
            <person name="Nishio T."/>
            <person name="Okada M."/>
            <person name="Plessy C."/>
            <person name="Shibata K."/>
            <person name="Shiraki T."/>
            <person name="Suzuki S."/>
            <person name="Tagami M."/>
            <person name="Waki K."/>
            <person name="Watahiki A."/>
            <person name="Okamura-Oho Y."/>
            <person name="Suzuki H."/>
            <person name="Kawai J."/>
            <person name="Hayashizaki Y."/>
        </authorList>
    </citation>
    <scope>NUCLEOTIDE SEQUENCE [LARGE SCALE MRNA] (ISOFORM 1)</scope>
    <source>
        <strain>NOD</strain>
        <tissue>Cerebellum</tissue>
        <tissue>Spleen</tissue>
    </source>
</reference>
<reference key="2">
    <citation type="journal article" date="2009" name="PLoS Biol.">
        <title>Lineage-specific biology revealed by a finished genome assembly of the mouse.</title>
        <authorList>
            <person name="Church D.M."/>
            <person name="Goodstadt L."/>
            <person name="Hillier L.W."/>
            <person name="Zody M.C."/>
            <person name="Goldstein S."/>
            <person name="She X."/>
            <person name="Bult C.J."/>
            <person name="Agarwala R."/>
            <person name="Cherry J.L."/>
            <person name="DiCuccio M."/>
            <person name="Hlavina W."/>
            <person name="Kapustin Y."/>
            <person name="Meric P."/>
            <person name="Maglott D."/>
            <person name="Birtle Z."/>
            <person name="Marques A.C."/>
            <person name="Graves T."/>
            <person name="Zhou S."/>
            <person name="Teague B."/>
            <person name="Potamousis K."/>
            <person name="Churas C."/>
            <person name="Place M."/>
            <person name="Herschleb J."/>
            <person name="Runnheim R."/>
            <person name="Forrest D."/>
            <person name="Amos-Landgraf J."/>
            <person name="Schwartz D.C."/>
            <person name="Cheng Z."/>
            <person name="Lindblad-Toh K."/>
            <person name="Eichler E.E."/>
            <person name="Ponting C.P."/>
        </authorList>
    </citation>
    <scope>NUCLEOTIDE SEQUENCE [LARGE SCALE GENOMIC DNA]</scope>
    <source>
        <strain>C57BL/6J</strain>
    </source>
</reference>
<reference key="3">
    <citation type="journal article" date="2004" name="Genome Res.">
        <title>The status, quality, and expansion of the NIH full-length cDNA project: the Mammalian Gene Collection (MGC).</title>
        <authorList>
            <consortium name="The MGC Project Team"/>
        </authorList>
    </citation>
    <scope>NUCLEOTIDE SEQUENCE [LARGE SCALE MRNA] (ISOFORM 1)</scope>
    <scope>NUCLEOTIDE SEQUENCE [LARGE SCALE MRNA] OF 567-838 (ISOFORM 3)</scope>
    <source>
        <tissue>Mammary tumor</tissue>
    </source>
</reference>
<reference key="4">
    <citation type="submission" date="2005-02" db="EMBL/GenBank/DDBJ databases">
        <title>Prediction of the coding sequences of mouse homologues of KIAA gene. The complete nucleotide sequences of mouse KIAA-homologous cDNAs identified by screening of terminal sequences of cDNA clones randomly sampled from size-fractionated libraries.</title>
        <authorList>
            <person name="Okazaki N."/>
            <person name="Kikuno R.F."/>
            <person name="Ohara R."/>
            <person name="Inamoto S."/>
            <person name="Nagase T."/>
            <person name="Ohara O."/>
            <person name="Koga H."/>
        </authorList>
    </citation>
    <scope>NUCLEOTIDE SEQUENCE [LARGE SCALE MRNA] OF 689-838 (ISOFORM 2)</scope>
    <scope>NUCLEOTIDE SEQUENCE [LARGE SCALE MRNA] OF 519-909 (ISOFORM 4)</scope>
    <source>
        <tissue>Embryonic intestine</tissue>
    </source>
</reference>
<reference key="5">
    <citation type="journal article" date="2007" name="Nat. Med.">
        <title>The E3 ligase HACE1 is a critical chromosome 6q21 tumor suppressor involved in multiple cancers.</title>
        <authorList>
            <person name="Zhang L."/>
            <person name="Anglesio M.S."/>
            <person name="O'Sullivan M."/>
            <person name="Zhang F."/>
            <person name="Yang G."/>
            <person name="Sarao R."/>
            <person name="Mai P.N."/>
            <person name="Cronin S."/>
            <person name="Hara H."/>
            <person name="Melnyk N."/>
            <person name="Li L."/>
            <person name="Wada T."/>
            <person name="Liu P.P."/>
            <person name="Farrar J."/>
            <person name="Arceci R.J."/>
            <person name="Sorensen P.H."/>
            <person name="Penninger J.M."/>
        </authorList>
    </citation>
    <scope>DISRUPTION PHENOTYPE</scope>
</reference>
<reference key="6">
    <citation type="journal article" date="2009" name="J. Cell. Biochem.">
        <title>HACE1: A novel repressor of RAR transcriptional activity.</title>
        <authorList>
            <person name="Zhao J."/>
            <person name="Zhang Z."/>
            <person name="Vucetic Z."/>
            <person name="Soprano K.J."/>
            <person name="Soprano D.R."/>
        </authorList>
    </citation>
    <scope>INTERACTION WITH RARB</scope>
    <scope>FUNCTION</scope>
</reference>
<reference key="7">
    <citation type="journal article" date="2010" name="Cell">
        <title>A tissue-specific atlas of mouse protein phosphorylation and expression.</title>
        <authorList>
            <person name="Huttlin E.L."/>
            <person name="Jedrychowski M.P."/>
            <person name="Elias J.E."/>
            <person name="Goswami T."/>
            <person name="Rad R."/>
            <person name="Beausoleil S.A."/>
            <person name="Villen J."/>
            <person name="Haas W."/>
            <person name="Sowa M.E."/>
            <person name="Gygi S.P."/>
        </authorList>
    </citation>
    <scope>IDENTIFICATION BY MASS SPECTROMETRY [LARGE SCALE ANALYSIS]</scope>
    <source>
        <tissue>Brain</tissue>
        <tissue>Lung</tissue>
        <tissue>Spleen</tissue>
        <tissue>Testis</tissue>
    </source>
</reference>
<reference key="8">
    <citation type="journal article" date="2024" name="Nat. Struct. Mol. Biol.">
        <title>Structural mechanisms of autoinhibition and substrate recognition by the ubiquitin ligase HACE1.</title>
        <authorList>
            <person name="During J."/>
            <person name="Wolter M."/>
            <person name="Toplak J.J."/>
            <person name="Torres C."/>
            <person name="Dybkov O."/>
            <person name="Fokkens T.J."/>
            <person name="Bohnsack K.E."/>
            <person name="Urlaub H."/>
            <person name="Steinchen W."/>
            <person name="Dienemann C."/>
            <person name="Lorenz S."/>
        </authorList>
    </citation>
    <scope>SUBUNIT</scope>
</reference>
<proteinExistence type="evidence at protein level"/>
<feature type="chain" id="PRO_0000280623" description="E3 ubiquitin-protein ligase HACE1">
    <location>
        <begin position="1"/>
        <end position="909"/>
    </location>
</feature>
<feature type="repeat" description="ANK 1" evidence="1">
    <location>
        <begin position="23"/>
        <end position="55"/>
    </location>
</feature>
<feature type="repeat" description="ANK 2" evidence="1">
    <location>
        <begin position="64"/>
        <end position="93"/>
    </location>
</feature>
<feature type="repeat" description="ANK 3" evidence="1">
    <location>
        <begin position="97"/>
        <end position="126"/>
    </location>
</feature>
<feature type="repeat" description="ANK 4" evidence="1">
    <location>
        <begin position="130"/>
        <end position="159"/>
    </location>
</feature>
<feature type="repeat" description="ANK 5" evidence="1">
    <location>
        <begin position="163"/>
        <end position="192"/>
    </location>
</feature>
<feature type="repeat" description="ANK 6" evidence="1">
    <location>
        <begin position="196"/>
        <end position="226"/>
    </location>
</feature>
<feature type="repeat" description="ANK 7" evidence="1">
    <location>
        <begin position="228"/>
        <end position="253"/>
    </location>
</feature>
<feature type="domain" description="HECT" evidence="2">
    <location>
        <begin position="574"/>
        <end position="909"/>
    </location>
</feature>
<feature type="region of interest" description="N-terminal helix important for homodimerization" evidence="1">
    <location>
        <begin position="1"/>
        <end position="21"/>
    </location>
</feature>
<feature type="region of interest" description="Disordered" evidence="3">
    <location>
        <begin position="398"/>
        <end position="433"/>
    </location>
</feature>
<feature type="active site" description="Glycyl thioester intermediate" evidence="2">
    <location>
        <position position="876"/>
    </location>
</feature>
<feature type="splice variant" id="VSP_023832" description="In isoform 3 and isoform 4." evidence="7 9">
    <location>
        <begin position="738"/>
        <end position="781"/>
    </location>
</feature>
<feature type="splice variant" id="VSP_042379" description="In isoform 4." evidence="9">
    <location>
        <begin position="814"/>
        <end position="832"/>
    </location>
</feature>
<feature type="splice variant" id="VSP_023833" description="In isoform 2." evidence="9">
    <original>S</original>
    <variation>R</variation>
    <location>
        <position position="838"/>
    </location>
</feature>
<feature type="splice variant" id="VSP_023834" description="In isoform 2." evidence="9">
    <location>
        <begin position="839"/>
        <end position="909"/>
    </location>
</feature>
<feature type="sequence conflict" description="In Ref. 1; BAC31390." evidence="10" ref="1">
    <original>N</original>
    <variation>S</variation>
    <location>
        <position position="92"/>
    </location>
</feature>
<dbReference type="EC" id="2.3.2.26" evidence="1"/>
<dbReference type="EMBL" id="AK042879">
    <property type="protein sequence ID" value="BAC31390.1"/>
    <property type="molecule type" value="mRNA"/>
</dbReference>
<dbReference type="EMBL" id="AK156958">
    <property type="protein sequence ID" value="BAE33915.1"/>
    <property type="molecule type" value="mRNA"/>
</dbReference>
<dbReference type="EMBL" id="AC135669">
    <property type="status" value="NOT_ANNOTATED_CDS"/>
    <property type="molecule type" value="Genomic_DNA"/>
</dbReference>
<dbReference type="EMBL" id="AC153847">
    <property type="status" value="NOT_ANNOTATED_CDS"/>
    <property type="molecule type" value="Genomic_DNA"/>
</dbReference>
<dbReference type="EMBL" id="BC025227">
    <property type="protein sequence ID" value="AAH25227.1"/>
    <property type="molecule type" value="mRNA"/>
</dbReference>
<dbReference type="EMBL" id="BC025474">
    <property type="protein sequence ID" value="AAH25474.1"/>
    <property type="status" value="ALT_INIT"/>
    <property type="molecule type" value="mRNA"/>
</dbReference>
<dbReference type="EMBL" id="BC120695">
    <property type="protein sequence ID" value="AAI20696.1"/>
    <property type="molecule type" value="mRNA"/>
</dbReference>
<dbReference type="EMBL" id="BC120697">
    <property type="protein sequence ID" value="AAI20698.1"/>
    <property type="molecule type" value="mRNA"/>
</dbReference>
<dbReference type="EMBL" id="AK220383">
    <property type="protein sequence ID" value="BAD90440.1"/>
    <property type="molecule type" value="mRNA"/>
</dbReference>
<dbReference type="CCDS" id="CCDS23829.1">
    <molecule id="Q3U0D9-1"/>
</dbReference>
<dbReference type="RefSeq" id="NP_766061.2">
    <molecule id="Q3U0D9-1"/>
    <property type="nucleotide sequence ID" value="NM_172473.3"/>
</dbReference>
<dbReference type="SMR" id="Q3U0D9"/>
<dbReference type="BioGRID" id="229081">
    <property type="interactions" value="4"/>
</dbReference>
<dbReference type="FunCoup" id="Q3U0D9">
    <property type="interactions" value="4655"/>
</dbReference>
<dbReference type="IntAct" id="Q3U0D9">
    <property type="interactions" value="1"/>
</dbReference>
<dbReference type="STRING" id="10090.ENSMUSP00000039206"/>
<dbReference type="iPTMnet" id="Q3U0D9"/>
<dbReference type="PhosphoSitePlus" id="Q3U0D9"/>
<dbReference type="SwissPalm" id="Q3U0D9"/>
<dbReference type="PaxDb" id="10090-ENSMUSP00000039206"/>
<dbReference type="PeptideAtlas" id="Q3U0D9"/>
<dbReference type="ProteomicsDB" id="270881">
    <molecule id="Q3U0D9-1"/>
</dbReference>
<dbReference type="ProteomicsDB" id="270882">
    <molecule id="Q3U0D9-2"/>
</dbReference>
<dbReference type="ProteomicsDB" id="270883">
    <molecule id="Q3U0D9-3"/>
</dbReference>
<dbReference type="ProteomicsDB" id="270884">
    <molecule id="Q3U0D9-4"/>
</dbReference>
<dbReference type="Pumba" id="Q3U0D9"/>
<dbReference type="Antibodypedia" id="32098">
    <property type="antibodies" value="242 antibodies from 28 providers"/>
</dbReference>
<dbReference type="DNASU" id="209462"/>
<dbReference type="Ensembl" id="ENSMUST00000037044.13">
    <molecule id="Q3U0D9-1"/>
    <property type="protein sequence ID" value="ENSMUSP00000039206.7"/>
    <property type="gene ID" value="ENSMUSG00000038822.16"/>
</dbReference>
<dbReference type="GeneID" id="209462"/>
<dbReference type="KEGG" id="mmu:209462"/>
<dbReference type="UCSC" id="uc007fad.2">
    <molecule id="Q3U0D9-1"/>
    <property type="organism name" value="mouse"/>
</dbReference>
<dbReference type="AGR" id="MGI:2446110"/>
<dbReference type="CTD" id="57531"/>
<dbReference type="MGI" id="MGI:2446110">
    <property type="gene designation" value="Hace1"/>
</dbReference>
<dbReference type="VEuPathDB" id="HostDB:ENSMUSG00000038822"/>
<dbReference type="eggNOG" id="KOG0939">
    <property type="taxonomic scope" value="Eukaryota"/>
</dbReference>
<dbReference type="eggNOG" id="KOG4177">
    <property type="taxonomic scope" value="Eukaryota"/>
</dbReference>
<dbReference type="GeneTree" id="ENSGT00940000155839"/>
<dbReference type="HOGENOM" id="CLU_015878_0_0_1"/>
<dbReference type="InParanoid" id="Q3U0D9"/>
<dbReference type="OMA" id="QDHQDAT"/>
<dbReference type="OrthoDB" id="8068875at2759"/>
<dbReference type="PhylomeDB" id="Q3U0D9"/>
<dbReference type="TreeFam" id="TF323417"/>
<dbReference type="Reactome" id="R-MMU-983168">
    <property type="pathway name" value="Antigen processing: Ubiquitination &amp; Proteasome degradation"/>
</dbReference>
<dbReference type="UniPathway" id="UPA00143"/>
<dbReference type="BioGRID-ORCS" id="209462">
    <property type="hits" value="5 hits in 77 CRISPR screens"/>
</dbReference>
<dbReference type="ChiTaRS" id="Hace1">
    <property type="organism name" value="mouse"/>
</dbReference>
<dbReference type="PRO" id="PR:Q3U0D9"/>
<dbReference type="Proteomes" id="UP000000589">
    <property type="component" value="Chromosome 10"/>
</dbReference>
<dbReference type="RNAct" id="Q3U0D9">
    <property type="molecule type" value="protein"/>
</dbReference>
<dbReference type="Bgee" id="ENSMUSG00000038822">
    <property type="expression patterns" value="Expressed in piriform cortex and 251 other cell types or tissues"/>
</dbReference>
<dbReference type="ExpressionAtlas" id="Q3U0D9">
    <property type="expression patterns" value="baseline and differential"/>
</dbReference>
<dbReference type="GO" id="GO:0005783">
    <property type="term" value="C:endoplasmic reticulum"/>
    <property type="evidence" value="ECO:0007669"/>
    <property type="project" value="UniProtKB-SubCell"/>
</dbReference>
<dbReference type="GO" id="GO:0032580">
    <property type="term" value="C:Golgi cisterna membrane"/>
    <property type="evidence" value="ECO:0007669"/>
    <property type="project" value="UniProtKB-SubCell"/>
</dbReference>
<dbReference type="GO" id="GO:0000139">
    <property type="term" value="C:Golgi membrane"/>
    <property type="evidence" value="ECO:0000250"/>
    <property type="project" value="UniProtKB"/>
</dbReference>
<dbReference type="GO" id="GO:0016604">
    <property type="term" value="C:nuclear body"/>
    <property type="evidence" value="ECO:0007669"/>
    <property type="project" value="Ensembl"/>
</dbReference>
<dbReference type="GO" id="GO:0031267">
    <property type="term" value="F:small GTPase binding"/>
    <property type="evidence" value="ECO:0000250"/>
    <property type="project" value="UniProtKB"/>
</dbReference>
<dbReference type="GO" id="GO:0004842">
    <property type="term" value="F:ubiquitin-protein transferase activity"/>
    <property type="evidence" value="ECO:0000250"/>
    <property type="project" value="UniProtKB"/>
</dbReference>
<dbReference type="GO" id="GO:0007030">
    <property type="term" value="P:Golgi organization"/>
    <property type="evidence" value="ECO:0000250"/>
    <property type="project" value="UniProtKB"/>
</dbReference>
<dbReference type="GO" id="GO:0061025">
    <property type="term" value="P:membrane fusion"/>
    <property type="evidence" value="ECO:0000250"/>
    <property type="project" value="UniProtKB"/>
</dbReference>
<dbReference type="GO" id="GO:0070936">
    <property type="term" value="P:protein K48-linked ubiquitination"/>
    <property type="evidence" value="ECO:0000250"/>
    <property type="project" value="UniProtKB"/>
</dbReference>
<dbReference type="GO" id="GO:0016567">
    <property type="term" value="P:protein ubiquitination"/>
    <property type="evidence" value="ECO:0000250"/>
    <property type="project" value="UniProtKB"/>
</dbReference>
<dbReference type="GO" id="GO:0030334">
    <property type="term" value="P:regulation of cell migration"/>
    <property type="evidence" value="ECO:0000250"/>
    <property type="project" value="UniProtKB"/>
</dbReference>
<dbReference type="GO" id="GO:0006511">
    <property type="term" value="P:ubiquitin-dependent protein catabolic process"/>
    <property type="evidence" value="ECO:0000250"/>
    <property type="project" value="UniProtKB"/>
</dbReference>
<dbReference type="CDD" id="cd00078">
    <property type="entry name" value="HECTc"/>
    <property type="match status" value="1"/>
</dbReference>
<dbReference type="FunFam" id="3.90.1750.10:FF:000026">
    <property type="entry name" value="E3 ubiquitin-protein ligase HACE1"/>
    <property type="match status" value="1"/>
</dbReference>
<dbReference type="FunFam" id="1.25.40.20:FF:000051">
    <property type="entry name" value="E3 ubiquitin-protein ligase HACE1 isoform X1"/>
    <property type="match status" value="1"/>
</dbReference>
<dbReference type="FunFam" id="3.30.2410.10:FF:000016">
    <property type="entry name" value="E3 ubiquitin-protein ligase HACE1 isoform X1"/>
    <property type="match status" value="1"/>
</dbReference>
<dbReference type="FunFam" id="3.90.1750.10:FF:000019">
    <property type="entry name" value="E3 ubiquitin-protein ligase HACE1 isoform X1"/>
    <property type="match status" value="1"/>
</dbReference>
<dbReference type="FunFam" id="3.30.2160.10:FF:000001">
    <property type="entry name" value="E3 ubiquitin-protein ligase NEDD4-like"/>
    <property type="match status" value="1"/>
</dbReference>
<dbReference type="FunFam" id="1.25.40.20:FF:000256">
    <property type="entry name" value="HECT domain and ankyrin repeat containing E3 ubiquitin protein ligase 1"/>
    <property type="match status" value="1"/>
</dbReference>
<dbReference type="Gene3D" id="1.25.40.20">
    <property type="entry name" value="Ankyrin repeat-containing domain"/>
    <property type="match status" value="2"/>
</dbReference>
<dbReference type="Gene3D" id="3.30.2160.10">
    <property type="entry name" value="Hect, E3 ligase catalytic domain"/>
    <property type="match status" value="1"/>
</dbReference>
<dbReference type="Gene3D" id="3.30.2410.10">
    <property type="entry name" value="Hect, E3 ligase catalytic domain"/>
    <property type="match status" value="1"/>
</dbReference>
<dbReference type="Gene3D" id="3.90.1750.10">
    <property type="entry name" value="Hect, E3 ligase catalytic domains"/>
    <property type="match status" value="1"/>
</dbReference>
<dbReference type="InterPro" id="IPR002110">
    <property type="entry name" value="Ankyrin_rpt"/>
</dbReference>
<dbReference type="InterPro" id="IPR036770">
    <property type="entry name" value="Ankyrin_rpt-contain_sf"/>
</dbReference>
<dbReference type="InterPro" id="IPR050409">
    <property type="entry name" value="E3_ubiq-protein_ligase"/>
</dbReference>
<dbReference type="InterPro" id="IPR000569">
    <property type="entry name" value="HECT_dom"/>
</dbReference>
<dbReference type="InterPro" id="IPR035983">
    <property type="entry name" value="Hect_E3_ubiquitin_ligase"/>
</dbReference>
<dbReference type="PANTHER" id="PTHR11254:SF363">
    <property type="entry name" value="E3 UBIQUITIN-PROTEIN LIGASE HACE1"/>
    <property type="match status" value="1"/>
</dbReference>
<dbReference type="PANTHER" id="PTHR11254">
    <property type="entry name" value="HECT DOMAIN UBIQUITIN-PROTEIN LIGASE"/>
    <property type="match status" value="1"/>
</dbReference>
<dbReference type="Pfam" id="PF12796">
    <property type="entry name" value="Ank_2"/>
    <property type="match status" value="2"/>
</dbReference>
<dbReference type="Pfam" id="PF13857">
    <property type="entry name" value="Ank_5"/>
    <property type="match status" value="1"/>
</dbReference>
<dbReference type="Pfam" id="PF00632">
    <property type="entry name" value="HECT"/>
    <property type="match status" value="1"/>
</dbReference>
<dbReference type="PRINTS" id="PR01415">
    <property type="entry name" value="ANKYRIN"/>
</dbReference>
<dbReference type="SMART" id="SM00248">
    <property type="entry name" value="ANK"/>
    <property type="match status" value="6"/>
</dbReference>
<dbReference type="SMART" id="SM00119">
    <property type="entry name" value="HECTc"/>
    <property type="match status" value="1"/>
</dbReference>
<dbReference type="SUPFAM" id="SSF48403">
    <property type="entry name" value="Ankyrin repeat"/>
    <property type="match status" value="1"/>
</dbReference>
<dbReference type="SUPFAM" id="SSF56204">
    <property type="entry name" value="Hect, E3 ligase catalytic domain"/>
    <property type="match status" value="1"/>
</dbReference>
<dbReference type="PROSITE" id="PS50297">
    <property type="entry name" value="ANK_REP_REGION"/>
    <property type="match status" value="1"/>
</dbReference>
<dbReference type="PROSITE" id="PS50088">
    <property type="entry name" value="ANK_REPEAT"/>
    <property type="match status" value="5"/>
</dbReference>
<dbReference type="PROSITE" id="PS50237">
    <property type="entry name" value="HECT"/>
    <property type="match status" value="1"/>
</dbReference>
<organism>
    <name type="scientific">Mus musculus</name>
    <name type="common">Mouse</name>
    <dbReference type="NCBI Taxonomy" id="10090"/>
    <lineage>
        <taxon>Eukaryota</taxon>
        <taxon>Metazoa</taxon>
        <taxon>Chordata</taxon>
        <taxon>Craniata</taxon>
        <taxon>Vertebrata</taxon>
        <taxon>Euteleostomi</taxon>
        <taxon>Mammalia</taxon>
        <taxon>Eutheria</taxon>
        <taxon>Euarchontoglires</taxon>
        <taxon>Glires</taxon>
        <taxon>Rodentia</taxon>
        <taxon>Myomorpha</taxon>
        <taxon>Muroidea</taxon>
        <taxon>Muridae</taxon>
        <taxon>Murinae</taxon>
        <taxon>Mus</taxon>
        <taxon>Mus</taxon>
    </lineage>
</organism>
<sequence length="909" mass="102114">MERAMEQLNRLTRSLRRARTVELPEDNETAVYTLMPMVMADQHRSVSELLSNSKFDVNYAFGRVKRSLLHIAANCGSVECLVLLLKKGANPNYQDISGCTPLHLAARNGQKKCMSKLLEYSADVNICNNEGLTAIHWLAVNGRTELLHDLVQHVTDVDVEDAMGQTALHVACQNGHKTTVQCLLDSGADINRPNVSGATPLYFACSHGQRDTAQILLLRGAKYLPDKNGVTPLDLCVQGGYGQTCEVLIQYHPRLFQTIVQMTQNEDLRENMLRQVLQHLSQQSESQYLKILTGLAEVATTNGHKLLSLSSNYDAQMKSLLRIVRIFCHVFRIGPSSPSNGIDMGYNGNKTPRSQVFKPLELLWHSLDEWLVLIATELMKNKEDSTDITSILLKQKGQDQEAPSLSAFEPPGPGSYESLPPGPGDSKPEVLAGEQEASADCQDVISVTANRLSAVIQAFYMCCSCQMPPGMTSPRFIEFVCKHDEVLKCFVNRNPKIIFDHFHFLLECPELMSRFMHIIKAQPFKDRCEWFYEHLHSGQPDSDMVHRPVSENDILLVHRDSIFRSSCEIVSKANCAKLKQGIAVRFHGEEGMGQGVVREWFDILSNEIVNPDYALFTQSADGTTFQPNSNSYVNPDHLNYFRFAGQILGLALNHRQLVNIYFTRSFYKHILGIPVNYQDVASIDPEYAKNLQWILDNDISDLGLELTFSVETDVFGAMEEVPLKPGGGSILVTQNNKAEYVQLVTELRMTRAIQPQINAFLQGFHMFIPPSLIQLFDEYELELLLSGMPEIDVNDWIKNTEYTSGYEREDPVIQWFWEVVEDITQEERVLLLQFVTGSSRVPHGGFANIMGGSGLQNFTIAAVPYTPNLLPTSSTCINMLKLPEYPSKEILKDRLLVALHCGSYGYTMA</sequence>
<protein>
    <recommendedName>
        <fullName>E3 ubiquitin-protein ligase HACE1</fullName>
        <ecNumber evidence="1">2.3.2.26</ecNumber>
    </recommendedName>
    <alternativeName>
        <fullName>HECT domain and ankyrin repeat-containing E3 ubiquitin-protein ligase 1</fullName>
    </alternativeName>
    <alternativeName>
        <fullName evidence="8">HECT-type E3 ubiquitin transferase HACE1</fullName>
    </alternativeName>
</protein>
<accession>Q3U0D9</accession>
<accession>F6VQI5</accession>
<accession>F7ALT5</accession>
<accession>Q5DTY7</accession>
<accession>Q8BXY2</accession>
<accession>Q8R160</accession>
<accession>Q8R3G4</accession>
<comment type="function">
    <text evidence="1 5">E3 ubiquitin-protein ligase involved in Golgi membrane fusion and regulation of small GTPases (By similarity). Acts as a regulator of Golgi membrane dynamics during the cell cycle: recruited to Golgi membrane by Rab proteins and regulates postmitotic Golgi membrane fusion (By similarity). Acts by mediating ubiquitination during mitotic Golgi disassembly, ubiquitination serving as a signal for Golgi reassembly later, after cell division (By similarity). Specifically binds GTP-bound RAC1, mediating ubiquitination and subsequent degradation of active RAC1, thereby playing a role in host defense against pathogens (By similarity). May also act as a transcription regulator via its interaction with RARB (PubMed:19350571).</text>
</comment>
<comment type="catalytic activity">
    <reaction evidence="1">
        <text>S-ubiquitinyl-[E2 ubiquitin-conjugating enzyme]-L-cysteine + [acceptor protein]-L-lysine = [E2 ubiquitin-conjugating enzyme]-L-cysteine + N(6)-ubiquitinyl-[acceptor protein]-L-lysine.</text>
        <dbReference type="EC" id="2.3.2.26"/>
    </reaction>
</comment>
<comment type="activity regulation">
    <text evidence="1">Sterically autoinhibited in its dimeric state.</text>
</comment>
<comment type="pathway">
    <text evidence="1">Protein modification; protein ubiquitination.</text>
</comment>
<comment type="subunit">
    <text evidence="1 5 6">Homodimer (PubMed:38332367). The homodimer is autoinhibited and stabilized by its N-terminal helix (By similarity). Interacts with RAB1 (RAB1A, RAB1B or RAB1C), RAB4 (RAB4A or RAB4B) and RAB11 (RAB11A or RAB11B); in a GTP-dependent manner (By similarity). Interacts with the 26S proteasomal complex through the 20S core proteasomal subunit (By similarity). Interacts with RARB (PubMed:19350571).</text>
</comment>
<comment type="subcellular location">
    <subcellularLocation>
        <location evidence="1">Golgi apparatus</location>
        <location evidence="1">Golgi stack membrane</location>
    </subcellularLocation>
    <subcellularLocation>
        <location evidence="1">Cytoplasm</location>
    </subcellularLocation>
    <subcellularLocation>
        <location evidence="1">Endoplasmic reticulum</location>
    </subcellularLocation>
    <text evidence="1">A significant portion localizes to the endoplasmic reticulum. Targeted to Golgi membrane via its interaction with Rab proteins.</text>
</comment>
<comment type="alternative products">
    <event type="alternative splicing"/>
    <isoform>
        <id>Q3U0D9-1</id>
        <name>1</name>
        <sequence type="displayed"/>
    </isoform>
    <isoform>
        <id>Q3U0D9-2</id>
        <name>2</name>
        <sequence type="described" ref="VSP_023833 VSP_023834"/>
    </isoform>
    <isoform>
        <id>Q3U0D9-3</id>
        <name>3</name>
        <sequence type="described" ref="VSP_023832"/>
    </isoform>
    <isoform>
        <id>Q3U0D9-4</id>
        <name>4</name>
        <sequence type="described" ref="VSP_023832 VSP_042379"/>
    </isoform>
</comment>
<comment type="domain">
    <text evidence="1">The N-terminal lobe of the HECT domain is important for interaction with E2 ubiquitin-conjugating enzymes.</text>
</comment>
<comment type="domain">
    <text evidence="1">The ANK repeats ANK 3, ANK 4 and ANK 5 are important for recognizing the RAC1 substrate.</text>
</comment>
<comment type="PTM">
    <text evidence="1">Autoubiquitinated.</text>
</comment>
<comment type="disruption phenotype">
    <text evidence="4">Mice develop spontaneous, late-onset cancer. Moreover, tumor incidence in mice heterozygous for a p53/Tp53 mutation in higher in a Hace1-deficient background.</text>
</comment>
<comment type="sequence caution" evidence="10">
    <conflict type="erroneous initiation">
        <sequence resource="EMBL-CDS" id="AAH25474"/>
    </conflict>
    <text>Extended N-terminus.</text>
</comment>